<comment type="function">
    <text evidence="1">Functions as a response regulator involved in His-to-Asp phosphorelay signal transduction system. Phosphorylation of the Asp residue in the receiver domain activates the ability of the protein to promote the transcription of target genes. Type-A response regulators seem to act as negative regulators of the cytokinin signaling.</text>
</comment>
<comment type="tissue specificity">
    <text evidence="3">Expressed in roots, mature leaves and flowers, and at low levels in shoots.</text>
</comment>
<comment type="induction">
    <text evidence="3">Not induced by cytokinin.</text>
</comment>
<comment type="PTM">
    <text evidence="5">Two-component system major event consists of a His-to-Asp phosphorelay between a sensor histidine kinase (HK) and a response regulator (RR). In plants, the His-to-Asp phosphorelay involves an additional intermediate named Histidine-containing phosphotransfer protein (HPt). This multistep phosphorelay consists of a His-Asp-His-Asp sequential transfer of a phosphate group between first a His and an Asp of the HK protein, followed by the transfer to a conserved His of the HPt protein and finally the transfer to an Asp in the receiver domain of the RR protein.</text>
</comment>
<comment type="similarity">
    <text evidence="5">Belongs to the ARR family. Type-A subfamily.</text>
</comment>
<reference key="1">
    <citation type="journal article" date="2006" name="BMC Plant Biol.">
        <title>Molecular characterization and differential expression of cytokinin-responsive type-A response regulators in rice (Oryza sativa).</title>
        <authorList>
            <person name="Jain M."/>
            <person name="Tyagi A.K."/>
            <person name="Khurana J.P."/>
        </authorList>
    </citation>
    <scope>NUCLEOTIDE SEQUENCE [MRNA]</scope>
    <scope>TISSUE SPECIFICITY</scope>
    <scope>INDUCTION</scope>
    <source>
        <strain>cv. Pusa Basmati</strain>
    </source>
</reference>
<reference key="2">
    <citation type="journal article" date="2005" name="PLoS Biol.">
        <title>The genomes of Oryza sativa: a history of duplications.</title>
        <authorList>
            <person name="Yu J."/>
            <person name="Wang J."/>
            <person name="Lin W."/>
            <person name="Li S."/>
            <person name="Li H."/>
            <person name="Zhou J."/>
            <person name="Ni P."/>
            <person name="Dong W."/>
            <person name="Hu S."/>
            <person name="Zeng C."/>
            <person name="Zhang J."/>
            <person name="Zhang Y."/>
            <person name="Li R."/>
            <person name="Xu Z."/>
            <person name="Li S."/>
            <person name="Li X."/>
            <person name="Zheng H."/>
            <person name="Cong L."/>
            <person name="Lin L."/>
            <person name="Yin J."/>
            <person name="Geng J."/>
            <person name="Li G."/>
            <person name="Shi J."/>
            <person name="Liu J."/>
            <person name="Lv H."/>
            <person name="Li J."/>
            <person name="Wang J."/>
            <person name="Deng Y."/>
            <person name="Ran L."/>
            <person name="Shi X."/>
            <person name="Wang X."/>
            <person name="Wu Q."/>
            <person name="Li C."/>
            <person name="Ren X."/>
            <person name="Wang J."/>
            <person name="Wang X."/>
            <person name="Li D."/>
            <person name="Liu D."/>
            <person name="Zhang X."/>
            <person name="Ji Z."/>
            <person name="Zhao W."/>
            <person name="Sun Y."/>
            <person name="Zhang Z."/>
            <person name="Bao J."/>
            <person name="Han Y."/>
            <person name="Dong L."/>
            <person name="Ji J."/>
            <person name="Chen P."/>
            <person name="Wu S."/>
            <person name="Liu J."/>
            <person name="Xiao Y."/>
            <person name="Bu D."/>
            <person name="Tan J."/>
            <person name="Yang L."/>
            <person name="Ye C."/>
            <person name="Zhang J."/>
            <person name="Xu J."/>
            <person name="Zhou Y."/>
            <person name="Yu Y."/>
            <person name="Zhang B."/>
            <person name="Zhuang S."/>
            <person name="Wei H."/>
            <person name="Liu B."/>
            <person name="Lei M."/>
            <person name="Yu H."/>
            <person name="Li Y."/>
            <person name="Xu H."/>
            <person name="Wei S."/>
            <person name="He X."/>
            <person name="Fang L."/>
            <person name="Zhang Z."/>
            <person name="Zhang Y."/>
            <person name="Huang X."/>
            <person name="Su Z."/>
            <person name="Tong W."/>
            <person name="Li J."/>
            <person name="Tong Z."/>
            <person name="Li S."/>
            <person name="Ye J."/>
            <person name="Wang L."/>
            <person name="Fang L."/>
            <person name="Lei T."/>
            <person name="Chen C.-S."/>
            <person name="Chen H.-C."/>
            <person name="Xu Z."/>
            <person name="Li H."/>
            <person name="Huang H."/>
            <person name="Zhang F."/>
            <person name="Xu H."/>
            <person name="Li N."/>
            <person name="Zhao C."/>
            <person name="Li S."/>
            <person name="Dong L."/>
            <person name="Huang Y."/>
            <person name="Li L."/>
            <person name="Xi Y."/>
            <person name="Qi Q."/>
            <person name="Li W."/>
            <person name="Zhang B."/>
            <person name="Hu W."/>
            <person name="Zhang Y."/>
            <person name="Tian X."/>
            <person name="Jiao Y."/>
            <person name="Liang X."/>
            <person name="Jin J."/>
            <person name="Gao L."/>
            <person name="Zheng W."/>
            <person name="Hao B."/>
            <person name="Liu S.-M."/>
            <person name="Wang W."/>
            <person name="Yuan L."/>
            <person name="Cao M."/>
            <person name="McDermott J."/>
            <person name="Samudrala R."/>
            <person name="Wang J."/>
            <person name="Wong G.K.-S."/>
            <person name="Yang H."/>
        </authorList>
    </citation>
    <scope>NUCLEOTIDE SEQUENCE [LARGE SCALE GENOMIC DNA]</scope>
    <source>
        <strain>cv. 93-11</strain>
    </source>
</reference>
<name>ORR3_ORYSI</name>
<proteinExistence type="evidence at transcript level"/>
<protein>
    <recommendedName>
        <fullName evidence="5">Two-component response regulator ORR3</fullName>
    </recommendedName>
    <alternativeName>
        <fullName evidence="4">Type A response regulator 3</fullName>
        <shortName evidence="4">OsRR3</shortName>
    </alternativeName>
</protein>
<feature type="chain" id="PRO_0000433821" description="Two-component response regulator ORR3">
    <location>
        <begin position="1"/>
        <end position="131"/>
    </location>
</feature>
<feature type="domain" description="Response regulatory" evidence="2">
    <location>
        <begin position="12"/>
        <end position="129"/>
    </location>
</feature>
<feature type="modified residue" description="4-aspartylphosphate" evidence="2">
    <location>
        <position position="62"/>
    </location>
</feature>
<organism>
    <name type="scientific">Oryza sativa subsp. indica</name>
    <name type="common">Rice</name>
    <dbReference type="NCBI Taxonomy" id="39946"/>
    <lineage>
        <taxon>Eukaryota</taxon>
        <taxon>Viridiplantae</taxon>
        <taxon>Streptophyta</taxon>
        <taxon>Embryophyta</taxon>
        <taxon>Tracheophyta</taxon>
        <taxon>Spermatophyta</taxon>
        <taxon>Magnoliopsida</taxon>
        <taxon>Liliopsida</taxon>
        <taxon>Poales</taxon>
        <taxon>Poaceae</taxon>
        <taxon>BOP clade</taxon>
        <taxon>Oryzoideae</taxon>
        <taxon>Oryzeae</taxon>
        <taxon>Oryzinae</taxon>
        <taxon>Oryza</taxon>
        <taxon>Oryza sativa</taxon>
    </lineage>
</organism>
<gene>
    <name evidence="6" type="primary">RR3</name>
    <name evidence="7" type="ORF">OsI_09552</name>
</gene>
<dbReference type="EMBL" id="AJ938072">
    <property type="protein sequence ID" value="CAI79407.1"/>
    <property type="molecule type" value="mRNA"/>
</dbReference>
<dbReference type="EMBL" id="CM000127">
    <property type="protein sequence ID" value="EAY88114.1"/>
    <property type="molecule type" value="Genomic_DNA"/>
</dbReference>
<dbReference type="SMR" id="Q4GZK8"/>
<dbReference type="STRING" id="39946.Q4GZK8"/>
<dbReference type="EnsemblPlants" id="BGIOSGA005312-TA">
    <property type="protein sequence ID" value="BGIOSGA005312-PA"/>
    <property type="gene ID" value="BGIOSGA005312"/>
</dbReference>
<dbReference type="Gramene" id="BGIOSGA005312-TA">
    <property type="protein sequence ID" value="BGIOSGA005312-PA"/>
    <property type="gene ID" value="BGIOSGA005312"/>
</dbReference>
<dbReference type="HOGENOM" id="CLU_000445_69_5_1"/>
<dbReference type="OMA" id="SLCAHDH"/>
<dbReference type="Proteomes" id="UP000007015">
    <property type="component" value="Chromosome 2"/>
</dbReference>
<dbReference type="GO" id="GO:0005829">
    <property type="term" value="C:cytosol"/>
    <property type="evidence" value="ECO:0007669"/>
    <property type="project" value="EnsemblPlants"/>
</dbReference>
<dbReference type="GO" id="GO:0005634">
    <property type="term" value="C:nucleus"/>
    <property type="evidence" value="ECO:0007669"/>
    <property type="project" value="EnsemblPlants"/>
</dbReference>
<dbReference type="GO" id="GO:0009736">
    <property type="term" value="P:cytokinin-activated signaling pathway"/>
    <property type="evidence" value="ECO:0007669"/>
    <property type="project" value="UniProtKB-KW"/>
</dbReference>
<dbReference type="GO" id="GO:0000160">
    <property type="term" value="P:phosphorelay signal transduction system"/>
    <property type="evidence" value="ECO:0007669"/>
    <property type="project" value="UniProtKB-KW"/>
</dbReference>
<dbReference type="GO" id="GO:0009735">
    <property type="term" value="P:response to cytokinin"/>
    <property type="evidence" value="ECO:0000305"/>
    <property type="project" value="Gramene"/>
</dbReference>
<dbReference type="CDD" id="cd17581">
    <property type="entry name" value="REC_typeA_ARR"/>
    <property type="match status" value="1"/>
</dbReference>
<dbReference type="FunFam" id="3.40.50.2300:FF:000159">
    <property type="entry name" value="Two-component response regulator ORR5"/>
    <property type="match status" value="1"/>
</dbReference>
<dbReference type="Gene3D" id="3.40.50.2300">
    <property type="match status" value="1"/>
</dbReference>
<dbReference type="InterPro" id="IPR045279">
    <property type="entry name" value="ARR-like"/>
</dbReference>
<dbReference type="InterPro" id="IPR011006">
    <property type="entry name" value="CheY-like_superfamily"/>
</dbReference>
<dbReference type="InterPro" id="IPR001789">
    <property type="entry name" value="Sig_transdc_resp-reg_receiver"/>
</dbReference>
<dbReference type="PANTHER" id="PTHR43874">
    <property type="entry name" value="TWO-COMPONENT RESPONSE REGULATOR"/>
    <property type="match status" value="1"/>
</dbReference>
<dbReference type="PANTHER" id="PTHR43874:SF69">
    <property type="entry name" value="TWO-COMPONENT RESPONSE REGULATOR ORR3"/>
    <property type="match status" value="1"/>
</dbReference>
<dbReference type="Pfam" id="PF00072">
    <property type="entry name" value="Response_reg"/>
    <property type="match status" value="1"/>
</dbReference>
<dbReference type="SMART" id="SM00448">
    <property type="entry name" value="REC"/>
    <property type="match status" value="1"/>
</dbReference>
<dbReference type="SUPFAM" id="SSF52172">
    <property type="entry name" value="CheY-like"/>
    <property type="match status" value="1"/>
</dbReference>
<dbReference type="PROSITE" id="PS50110">
    <property type="entry name" value="RESPONSE_REGULATORY"/>
    <property type="match status" value="1"/>
</dbReference>
<accession>Q4GZK8</accession>
<keyword id="KW-0932">Cytokinin signaling pathway</keyword>
<keyword id="KW-0597">Phosphoprotein</keyword>
<keyword id="KW-1185">Reference proteome</keyword>
<keyword id="KW-0804">Transcription</keyword>
<keyword id="KW-0805">Transcription regulation</keyword>
<keyword id="KW-0902">Two-component regulatory system</keyword>
<evidence type="ECO:0000250" key="1">
    <source>
        <dbReference type="UniProtKB" id="Q9ZWS9"/>
    </source>
</evidence>
<evidence type="ECO:0000255" key="2">
    <source>
        <dbReference type="PROSITE-ProRule" id="PRU00169"/>
    </source>
</evidence>
<evidence type="ECO:0000269" key="3">
    <source>
    </source>
</evidence>
<evidence type="ECO:0000303" key="4">
    <source>
    </source>
</evidence>
<evidence type="ECO:0000305" key="5"/>
<evidence type="ECO:0000312" key="6">
    <source>
        <dbReference type="EMBL" id="CAI79407.1"/>
    </source>
</evidence>
<evidence type="ECO:0000312" key="7">
    <source>
        <dbReference type="EMBL" id="EAY88114.1"/>
    </source>
</evidence>
<sequence length="131" mass="14900">MSTKTVPEPEPHVLAVDDSIVDRTVISRLLRSSKYRVTTVDSGKRALEVLSLDRNVHMIITDYCMPEMTGFDLLKRVKESAELKEIPVVLMSSENSPTRIRRCLEEGAEDFLIKPVRPSDVSRLCNRVIMK</sequence>